<feature type="chain" id="PRO_1000118840" description="4-hydroxy-tetrahydrodipicolinate reductase">
    <location>
        <begin position="1"/>
        <end position="266"/>
    </location>
</feature>
<feature type="active site" description="Proton donor/acceptor" evidence="1">
    <location>
        <position position="155"/>
    </location>
</feature>
<feature type="active site" description="Proton donor" evidence="1">
    <location>
        <position position="159"/>
    </location>
</feature>
<feature type="binding site" evidence="1">
    <location>
        <begin position="10"/>
        <end position="15"/>
    </location>
    <ligand>
        <name>NAD(+)</name>
        <dbReference type="ChEBI" id="CHEBI:57540"/>
    </ligand>
</feature>
<feature type="binding site" evidence="1">
    <location>
        <position position="38"/>
    </location>
    <ligand>
        <name>NADP(+)</name>
        <dbReference type="ChEBI" id="CHEBI:58349"/>
    </ligand>
</feature>
<feature type="binding site" evidence="1">
    <location>
        <begin position="99"/>
        <end position="101"/>
    </location>
    <ligand>
        <name>NAD(+)</name>
        <dbReference type="ChEBI" id="CHEBI:57540"/>
    </ligand>
</feature>
<feature type="binding site" evidence="1">
    <location>
        <begin position="125"/>
        <end position="128"/>
    </location>
    <ligand>
        <name>NAD(+)</name>
        <dbReference type="ChEBI" id="CHEBI:57540"/>
    </ligand>
</feature>
<feature type="binding site" evidence="1">
    <location>
        <position position="156"/>
    </location>
    <ligand>
        <name>(S)-2,3,4,5-tetrahydrodipicolinate</name>
        <dbReference type="ChEBI" id="CHEBI:16845"/>
    </ligand>
</feature>
<feature type="binding site" evidence="1">
    <location>
        <begin position="165"/>
        <end position="166"/>
    </location>
    <ligand>
        <name>(S)-2,3,4,5-tetrahydrodipicolinate</name>
        <dbReference type="ChEBI" id="CHEBI:16845"/>
    </ligand>
</feature>
<accession>C3L8Q7</accession>
<name>DAPB_BACAC</name>
<comment type="function">
    <text evidence="1">Catalyzes the conversion of 4-hydroxy-tetrahydrodipicolinate (HTPA) to tetrahydrodipicolinate.</text>
</comment>
<comment type="catalytic activity">
    <reaction evidence="1">
        <text>(S)-2,3,4,5-tetrahydrodipicolinate + NAD(+) + H2O = (2S,4S)-4-hydroxy-2,3,4,5-tetrahydrodipicolinate + NADH + H(+)</text>
        <dbReference type="Rhea" id="RHEA:35323"/>
        <dbReference type="ChEBI" id="CHEBI:15377"/>
        <dbReference type="ChEBI" id="CHEBI:15378"/>
        <dbReference type="ChEBI" id="CHEBI:16845"/>
        <dbReference type="ChEBI" id="CHEBI:57540"/>
        <dbReference type="ChEBI" id="CHEBI:57945"/>
        <dbReference type="ChEBI" id="CHEBI:67139"/>
        <dbReference type="EC" id="1.17.1.8"/>
    </reaction>
</comment>
<comment type="catalytic activity">
    <reaction evidence="1">
        <text>(S)-2,3,4,5-tetrahydrodipicolinate + NADP(+) + H2O = (2S,4S)-4-hydroxy-2,3,4,5-tetrahydrodipicolinate + NADPH + H(+)</text>
        <dbReference type="Rhea" id="RHEA:35331"/>
        <dbReference type="ChEBI" id="CHEBI:15377"/>
        <dbReference type="ChEBI" id="CHEBI:15378"/>
        <dbReference type="ChEBI" id="CHEBI:16845"/>
        <dbReference type="ChEBI" id="CHEBI:57783"/>
        <dbReference type="ChEBI" id="CHEBI:58349"/>
        <dbReference type="ChEBI" id="CHEBI:67139"/>
        <dbReference type="EC" id="1.17.1.8"/>
    </reaction>
</comment>
<comment type="pathway">
    <text evidence="1">Amino-acid biosynthesis; L-lysine biosynthesis via DAP pathway; (S)-tetrahydrodipicolinate from L-aspartate: step 4/4.</text>
</comment>
<comment type="subcellular location">
    <subcellularLocation>
        <location evidence="1">Cytoplasm</location>
    </subcellularLocation>
</comment>
<comment type="similarity">
    <text evidence="1">Belongs to the DapB family.</text>
</comment>
<comment type="caution">
    <text evidence="2">Was originally thought to be a dihydrodipicolinate reductase (DHDPR), catalyzing the conversion of dihydrodipicolinate to tetrahydrodipicolinate. However, it was shown in E.coli that the substrate of the enzymatic reaction is not dihydrodipicolinate (DHDP) but in fact (2S,4S)-4-hydroxy-2,3,4,5-tetrahydrodipicolinic acid (HTPA), the product released by the DapA-catalyzed reaction.</text>
</comment>
<reference key="1">
    <citation type="submission" date="2008-10" db="EMBL/GenBank/DDBJ databases">
        <title>Genome sequence of Bacillus anthracis str. CDC 684.</title>
        <authorList>
            <person name="Dodson R.J."/>
            <person name="Munk A.C."/>
            <person name="Brettin T."/>
            <person name="Bruce D."/>
            <person name="Detter C."/>
            <person name="Tapia R."/>
            <person name="Han C."/>
            <person name="Sutton G."/>
            <person name="Sims D."/>
        </authorList>
    </citation>
    <scope>NUCLEOTIDE SEQUENCE [LARGE SCALE GENOMIC DNA]</scope>
    <source>
        <strain>CDC 684 / NRRL 3495</strain>
    </source>
</reference>
<dbReference type="EC" id="1.17.1.8" evidence="1"/>
<dbReference type="EMBL" id="CP001215">
    <property type="protein sequence ID" value="ACP14208.1"/>
    <property type="molecule type" value="Genomic_DNA"/>
</dbReference>
<dbReference type="RefSeq" id="WP_000661726.1">
    <property type="nucleotide sequence ID" value="NC_012581.1"/>
</dbReference>
<dbReference type="SMR" id="C3L8Q7"/>
<dbReference type="GeneID" id="45021527"/>
<dbReference type="KEGG" id="bah:BAMEG_3040"/>
<dbReference type="HOGENOM" id="CLU_047479_0_1_9"/>
<dbReference type="UniPathway" id="UPA00034">
    <property type="reaction ID" value="UER00018"/>
</dbReference>
<dbReference type="GO" id="GO:0005829">
    <property type="term" value="C:cytosol"/>
    <property type="evidence" value="ECO:0007669"/>
    <property type="project" value="TreeGrafter"/>
</dbReference>
<dbReference type="GO" id="GO:0008839">
    <property type="term" value="F:4-hydroxy-tetrahydrodipicolinate reductase"/>
    <property type="evidence" value="ECO:0007669"/>
    <property type="project" value="UniProtKB-EC"/>
</dbReference>
<dbReference type="GO" id="GO:0051287">
    <property type="term" value="F:NAD binding"/>
    <property type="evidence" value="ECO:0007669"/>
    <property type="project" value="UniProtKB-UniRule"/>
</dbReference>
<dbReference type="GO" id="GO:0050661">
    <property type="term" value="F:NADP binding"/>
    <property type="evidence" value="ECO:0007669"/>
    <property type="project" value="UniProtKB-UniRule"/>
</dbReference>
<dbReference type="GO" id="GO:0016726">
    <property type="term" value="F:oxidoreductase activity, acting on CH or CH2 groups, NAD or NADP as acceptor"/>
    <property type="evidence" value="ECO:0007669"/>
    <property type="project" value="UniProtKB-UniRule"/>
</dbReference>
<dbReference type="GO" id="GO:0019877">
    <property type="term" value="P:diaminopimelate biosynthetic process"/>
    <property type="evidence" value="ECO:0007669"/>
    <property type="project" value="UniProtKB-UniRule"/>
</dbReference>
<dbReference type="GO" id="GO:0009089">
    <property type="term" value="P:lysine biosynthetic process via diaminopimelate"/>
    <property type="evidence" value="ECO:0007669"/>
    <property type="project" value="UniProtKB-UniRule"/>
</dbReference>
<dbReference type="CDD" id="cd02274">
    <property type="entry name" value="DHDPR_N"/>
    <property type="match status" value="1"/>
</dbReference>
<dbReference type="FunFam" id="3.30.360.10:FF:000009">
    <property type="entry name" value="4-hydroxy-tetrahydrodipicolinate reductase"/>
    <property type="match status" value="1"/>
</dbReference>
<dbReference type="FunFam" id="3.40.50.720:FF:000180">
    <property type="entry name" value="4-hydroxy-tetrahydrodipicolinate reductase"/>
    <property type="match status" value="1"/>
</dbReference>
<dbReference type="Gene3D" id="3.30.360.10">
    <property type="entry name" value="Dihydrodipicolinate Reductase, domain 2"/>
    <property type="match status" value="1"/>
</dbReference>
<dbReference type="Gene3D" id="3.40.50.720">
    <property type="entry name" value="NAD(P)-binding Rossmann-like Domain"/>
    <property type="match status" value="1"/>
</dbReference>
<dbReference type="HAMAP" id="MF_00102">
    <property type="entry name" value="DapB"/>
    <property type="match status" value="1"/>
</dbReference>
<dbReference type="InterPro" id="IPR022663">
    <property type="entry name" value="DapB_C"/>
</dbReference>
<dbReference type="InterPro" id="IPR000846">
    <property type="entry name" value="DapB_N"/>
</dbReference>
<dbReference type="InterPro" id="IPR022664">
    <property type="entry name" value="DapB_N_CS"/>
</dbReference>
<dbReference type="InterPro" id="IPR023940">
    <property type="entry name" value="DHDPR_bac"/>
</dbReference>
<dbReference type="InterPro" id="IPR036291">
    <property type="entry name" value="NAD(P)-bd_dom_sf"/>
</dbReference>
<dbReference type="NCBIfam" id="TIGR00036">
    <property type="entry name" value="dapB"/>
    <property type="match status" value="1"/>
</dbReference>
<dbReference type="PANTHER" id="PTHR20836:SF0">
    <property type="entry name" value="4-HYDROXY-TETRAHYDRODIPICOLINATE REDUCTASE 1, CHLOROPLASTIC-RELATED"/>
    <property type="match status" value="1"/>
</dbReference>
<dbReference type="PANTHER" id="PTHR20836">
    <property type="entry name" value="DIHYDRODIPICOLINATE REDUCTASE"/>
    <property type="match status" value="1"/>
</dbReference>
<dbReference type="Pfam" id="PF05173">
    <property type="entry name" value="DapB_C"/>
    <property type="match status" value="1"/>
</dbReference>
<dbReference type="Pfam" id="PF01113">
    <property type="entry name" value="DapB_N"/>
    <property type="match status" value="1"/>
</dbReference>
<dbReference type="PIRSF" id="PIRSF000161">
    <property type="entry name" value="DHPR"/>
    <property type="match status" value="1"/>
</dbReference>
<dbReference type="SUPFAM" id="SSF55347">
    <property type="entry name" value="Glyceraldehyde-3-phosphate dehydrogenase-like, C-terminal domain"/>
    <property type="match status" value="1"/>
</dbReference>
<dbReference type="SUPFAM" id="SSF51735">
    <property type="entry name" value="NAD(P)-binding Rossmann-fold domains"/>
    <property type="match status" value="1"/>
</dbReference>
<dbReference type="PROSITE" id="PS01298">
    <property type="entry name" value="DAPB"/>
    <property type="match status" value="1"/>
</dbReference>
<keyword id="KW-0028">Amino-acid biosynthesis</keyword>
<keyword id="KW-0963">Cytoplasm</keyword>
<keyword id="KW-0220">Diaminopimelate biosynthesis</keyword>
<keyword id="KW-0457">Lysine biosynthesis</keyword>
<keyword id="KW-0520">NAD</keyword>
<keyword id="KW-0521">NADP</keyword>
<keyword id="KW-0560">Oxidoreductase</keyword>
<sequence length="266" mass="29256">MKEMKVIIAGPRGRMGHEAVLLMERTEHFNLVAAVDYKHGGEKISDLPGMPALDATIYADLHTCLEEVEADVLLDLTTPEVGKQHVTLAVERGLRSVIGTTGFTEEELKQLTETAKEKAVGTIIAPNFAIGAVLMMKFSQMAAKYFQDVEVIELHHDQKLDAPSGTAVKTVELIRQNRESKQQGHPNEVEQLEGARGANVDGIHIHSVRLPGLIAHQEVMFGGDGQMLTVRHDSFNRASFMSGVKLSIETVMNLDHLVYGLENIID</sequence>
<gene>
    <name evidence="1" type="primary">dapB</name>
    <name type="ordered locus">BAMEG_3040</name>
</gene>
<proteinExistence type="inferred from homology"/>
<protein>
    <recommendedName>
        <fullName evidence="1">4-hydroxy-tetrahydrodipicolinate reductase</fullName>
        <shortName evidence="1">HTPA reductase</shortName>
        <ecNumber evidence="1">1.17.1.8</ecNumber>
    </recommendedName>
</protein>
<organism>
    <name type="scientific">Bacillus anthracis (strain CDC 684 / NRRL 3495)</name>
    <dbReference type="NCBI Taxonomy" id="568206"/>
    <lineage>
        <taxon>Bacteria</taxon>
        <taxon>Bacillati</taxon>
        <taxon>Bacillota</taxon>
        <taxon>Bacilli</taxon>
        <taxon>Bacillales</taxon>
        <taxon>Bacillaceae</taxon>
        <taxon>Bacillus</taxon>
        <taxon>Bacillus cereus group</taxon>
    </lineage>
</organism>
<evidence type="ECO:0000255" key="1">
    <source>
        <dbReference type="HAMAP-Rule" id="MF_00102"/>
    </source>
</evidence>
<evidence type="ECO:0000305" key="2"/>